<name>SHE9_AJECN</name>
<gene>
    <name type="primary">SHE9</name>
    <name type="ORF">HCAG_00942</name>
</gene>
<proteinExistence type="inferred from homology"/>
<keyword id="KW-0175">Coiled coil</keyword>
<keyword id="KW-0472">Membrane</keyword>
<keyword id="KW-0496">Mitochondrion</keyword>
<keyword id="KW-0999">Mitochondrion inner membrane</keyword>
<keyword id="KW-1185">Reference proteome</keyword>
<keyword id="KW-0809">Transit peptide</keyword>
<keyword id="KW-0812">Transmembrane</keyword>
<keyword id="KW-1133">Transmembrane helix</keyword>
<feature type="transit peptide" description="Mitochondrion" evidence="2">
    <location>
        <begin position="1"/>
        <end status="unknown"/>
    </location>
</feature>
<feature type="chain" id="PRO_0000351045" description="Sensitive to high expression protein 9 homolog, mitochondrial">
    <location>
        <begin status="unknown"/>
        <end position="369"/>
    </location>
</feature>
<feature type="topological domain" description="Mitochondrial matrix" evidence="2">
    <location>
        <begin status="unknown"/>
        <end position="176"/>
    </location>
</feature>
<feature type="transmembrane region" description="Helical" evidence="2">
    <location>
        <begin position="177"/>
        <end position="197"/>
    </location>
</feature>
<feature type="topological domain" description="Mitochondrial intermembrane" evidence="2">
    <location>
        <begin position="198"/>
        <end position="345"/>
    </location>
</feature>
<feature type="transmembrane region" description="Helical" evidence="2">
    <location>
        <begin position="346"/>
        <end position="366"/>
    </location>
</feature>
<feature type="topological domain" description="Mitochondrial matrix" evidence="2">
    <location>
        <begin position="367"/>
        <end position="369"/>
    </location>
</feature>
<feature type="coiled-coil region" evidence="2">
    <location>
        <begin position="128"/>
        <end position="156"/>
    </location>
</feature>
<comment type="function">
    <text evidence="1">Required for the maintenance of the structure of the mitochondrial inner membrane. Involved in mitochondrial morphology. Causes growth arrest when highly overexpressed (By similarity).</text>
</comment>
<comment type="subunit">
    <text evidence="1">Homooligomer.</text>
</comment>
<comment type="subcellular location">
    <subcellularLocation>
        <location evidence="1">Mitochondrion inner membrane</location>
        <topology evidence="1">Multi-pass membrane protein</topology>
    </subcellularLocation>
</comment>
<comment type="similarity">
    <text evidence="3">Belongs to the SHE9 family.</text>
</comment>
<sequence length="369" mass="40727">MPALSIPQTVFLCAEGREGSRRGEERFHAAKERWEGQSGGAERGGNAGYFHKKGFRDIEKLKQDILAQEQRVRETRTCVQEAKEAYSTAINRRSASQREVNELLQRKHAWSPTDLERFTSLYRSDHANERAETDAQEALVVAEREAEEAAALLSKSILSRYHEEQIWSDKIRRMSTWGTWGLMGVNVLLFLIFQVAVEPWRRRRLVKGFEEKVMEALERENGMKEGVGAVEGATLRDGATTVPAAAAAPSLIAEPVTPTFSNISDETPAGPSDAAMFTEQDVPDPAVVSATAPTLTALQPNKQSQSSTSALLLPPDASLSPDSWRQTIHDLFGERRITLSQRELTTVALESAAAGAAVMGVLIALFRPR</sequence>
<evidence type="ECO:0000250" key="1"/>
<evidence type="ECO:0000255" key="2"/>
<evidence type="ECO:0000305" key="3"/>
<organism>
    <name type="scientific">Ajellomyces capsulatus (strain NAm1 / WU24)</name>
    <name type="common">Darling's disease fungus</name>
    <name type="synonym">Histoplasma capsulatum</name>
    <dbReference type="NCBI Taxonomy" id="2059318"/>
    <lineage>
        <taxon>Eukaryota</taxon>
        <taxon>Fungi</taxon>
        <taxon>Dikarya</taxon>
        <taxon>Ascomycota</taxon>
        <taxon>Pezizomycotina</taxon>
        <taxon>Eurotiomycetes</taxon>
        <taxon>Eurotiomycetidae</taxon>
        <taxon>Onygenales</taxon>
        <taxon>Ajellomycetaceae</taxon>
        <taxon>Histoplasma</taxon>
    </lineage>
</organism>
<accession>A6QU86</accession>
<protein>
    <recommendedName>
        <fullName>Sensitive to high expression protein 9 homolog, mitochondrial</fullName>
    </recommendedName>
</protein>
<reference key="1">
    <citation type="journal article" date="2009" name="Genome Res.">
        <title>Comparative genomic analyses of the human fungal pathogens Coccidioides and their relatives.</title>
        <authorList>
            <person name="Sharpton T.J."/>
            <person name="Stajich J.E."/>
            <person name="Rounsley S.D."/>
            <person name="Gardner M.J."/>
            <person name="Wortman J.R."/>
            <person name="Jordar V.S."/>
            <person name="Maiti R."/>
            <person name="Kodira C.D."/>
            <person name="Neafsey D.E."/>
            <person name="Zeng Q."/>
            <person name="Hung C.-Y."/>
            <person name="McMahan C."/>
            <person name="Muszewska A."/>
            <person name="Grynberg M."/>
            <person name="Mandel M.A."/>
            <person name="Kellner E.M."/>
            <person name="Barker B.M."/>
            <person name="Galgiani J.N."/>
            <person name="Orbach M.J."/>
            <person name="Kirkland T.N."/>
            <person name="Cole G.T."/>
            <person name="Henn M.R."/>
            <person name="Birren B.W."/>
            <person name="Taylor J.W."/>
        </authorList>
    </citation>
    <scope>NUCLEOTIDE SEQUENCE [LARGE SCALE GENOMIC DNA]</scope>
    <source>
        <strain>NAm1 / WU24</strain>
    </source>
</reference>
<dbReference type="EMBL" id="CH476655">
    <property type="protein sequence ID" value="EDN03078.1"/>
    <property type="molecule type" value="Genomic_DNA"/>
</dbReference>
<dbReference type="SMR" id="A6QU86"/>
<dbReference type="KEGG" id="aje:HCAG_00942"/>
<dbReference type="VEuPathDB" id="FungiDB:HCAG_00942"/>
<dbReference type="HOGENOM" id="CLU_025632_2_2_1"/>
<dbReference type="OMA" id="VPAYATK"/>
<dbReference type="OrthoDB" id="12693at299071"/>
<dbReference type="Proteomes" id="UP000009297">
    <property type="component" value="Unassembled WGS sequence"/>
</dbReference>
<dbReference type="GO" id="GO:0005743">
    <property type="term" value="C:mitochondrial inner membrane"/>
    <property type="evidence" value="ECO:0007669"/>
    <property type="project" value="UniProtKB-SubCell"/>
</dbReference>
<dbReference type="GO" id="GO:0007007">
    <property type="term" value="P:inner mitochondrial membrane organization"/>
    <property type="evidence" value="ECO:0007669"/>
    <property type="project" value="TreeGrafter"/>
</dbReference>
<dbReference type="InterPro" id="IPR008839">
    <property type="entry name" value="MDM33_fungi"/>
</dbReference>
<dbReference type="PANTHER" id="PTHR31961">
    <property type="entry name" value="SENSITIVE TO HIGH EXPRESSION PROTEIN 9, MITOCHONDRIAL"/>
    <property type="match status" value="1"/>
</dbReference>
<dbReference type="PANTHER" id="PTHR31961:SF3">
    <property type="entry name" value="SENSITIVE TO HIGH EXPRESSION PROTEIN 9, MITOCHONDRIAL"/>
    <property type="match status" value="1"/>
</dbReference>
<dbReference type="Pfam" id="PF05546">
    <property type="entry name" value="She9_MDM33"/>
    <property type="match status" value="1"/>
</dbReference>